<keyword id="KW-0150">Chloroplast</keyword>
<keyword id="KW-0934">Plastid</keyword>
<keyword id="KW-1185">Reference proteome</keyword>
<keyword id="KW-0687">Ribonucleoprotein</keyword>
<keyword id="KW-0689">Ribosomal protein</keyword>
<keyword id="KW-0694">RNA-binding</keyword>
<keyword id="KW-0699">rRNA-binding</keyword>
<geneLocation type="chloroplast"/>
<name>RR19_WHEAT</name>
<organism>
    <name type="scientific">Triticum aestivum</name>
    <name type="common">Wheat</name>
    <dbReference type="NCBI Taxonomy" id="4565"/>
    <lineage>
        <taxon>Eukaryota</taxon>
        <taxon>Viridiplantae</taxon>
        <taxon>Streptophyta</taxon>
        <taxon>Embryophyta</taxon>
        <taxon>Tracheophyta</taxon>
        <taxon>Spermatophyta</taxon>
        <taxon>Magnoliopsida</taxon>
        <taxon>Liliopsida</taxon>
        <taxon>Poales</taxon>
        <taxon>Poaceae</taxon>
        <taxon>BOP clade</taxon>
        <taxon>Pooideae</taxon>
        <taxon>Triticodae</taxon>
        <taxon>Triticeae</taxon>
        <taxon>Triticinae</taxon>
        <taxon>Triticum</taxon>
    </lineage>
</organism>
<evidence type="ECO:0000250" key="1"/>
<evidence type="ECO:0000305" key="2"/>
<gene>
    <name type="primary">rps19-A</name>
</gene>
<gene>
    <name type="primary">rps19-B</name>
</gene>
<feature type="initiator methionine" description="Removed" evidence="1">
    <location>
        <position position="1"/>
    </location>
</feature>
<feature type="chain" id="PRO_0000129996" description="Small ribosomal subunit protein uS19c">
    <location>
        <begin position="2"/>
        <end position="93"/>
    </location>
</feature>
<protein>
    <recommendedName>
        <fullName evidence="2">Small ribosomal subunit protein uS19c</fullName>
    </recommendedName>
    <alternativeName>
        <fullName>30S ribosomal protein S19, chloroplastic</fullName>
    </alternativeName>
</protein>
<comment type="function">
    <text evidence="1">Protein S19 forms a complex with S13 that binds strongly to the 16S ribosomal RNA.</text>
</comment>
<comment type="subcellular location">
    <subcellularLocation>
        <location>Plastid</location>
        <location>Chloroplast</location>
    </subcellularLocation>
</comment>
<comment type="similarity">
    <text evidence="2">Belongs to the universal ribosomal protein uS19 family.</text>
</comment>
<reference key="1">
    <citation type="journal article" date="2000" name="Plant Mol. Biol. Rep.">
        <title>Chinese spring wheat (Triticum aestivum L.) chloroplast genome: complete sequence and contig clones.</title>
        <authorList>
            <person name="Ogihara Y."/>
            <person name="Isono K."/>
            <person name="Kojima T."/>
            <person name="Endo A."/>
            <person name="Hanaoka M."/>
            <person name="Shiina T."/>
            <person name="Terachi T."/>
            <person name="Utsugi S."/>
            <person name="Murata M."/>
            <person name="Mori N."/>
            <person name="Takumi S."/>
            <person name="Ikeo K."/>
            <person name="Gojobori T."/>
            <person name="Murai R."/>
            <person name="Murai K."/>
            <person name="Matsuoka Y."/>
            <person name="Ohnishi Y."/>
            <person name="Tajiri H."/>
            <person name="Tsunewaki K."/>
        </authorList>
    </citation>
    <scope>NUCLEOTIDE SEQUENCE [LARGE SCALE GENOMIC DNA]</scope>
    <source>
        <strain>cv. Chinese Spring</strain>
    </source>
</reference>
<dbReference type="EMBL" id="AB042240">
    <property type="protein sequence ID" value="BAB47074.1"/>
    <property type="molecule type" value="Genomic_DNA"/>
</dbReference>
<dbReference type="EMBL" id="AB042240">
    <property type="protein sequence ID" value="BAB47097.1"/>
    <property type="molecule type" value="Genomic_DNA"/>
</dbReference>
<dbReference type="SMR" id="P60577"/>
<dbReference type="STRING" id="4565.P60577"/>
<dbReference type="PaxDb" id="4565-EPlTAEP00000010020"/>
<dbReference type="KEGG" id="taes:803103"/>
<dbReference type="KEGG" id="taes:803111"/>
<dbReference type="eggNOG" id="KOG0899">
    <property type="taxonomic scope" value="Eukaryota"/>
</dbReference>
<dbReference type="Proteomes" id="UP000019116">
    <property type="component" value="Chloroplast"/>
</dbReference>
<dbReference type="GO" id="GO:0009507">
    <property type="term" value="C:chloroplast"/>
    <property type="evidence" value="ECO:0007669"/>
    <property type="project" value="UniProtKB-SubCell"/>
</dbReference>
<dbReference type="GO" id="GO:0005763">
    <property type="term" value="C:mitochondrial small ribosomal subunit"/>
    <property type="evidence" value="ECO:0000318"/>
    <property type="project" value="GO_Central"/>
</dbReference>
<dbReference type="GO" id="GO:0019843">
    <property type="term" value="F:rRNA binding"/>
    <property type="evidence" value="ECO:0007669"/>
    <property type="project" value="UniProtKB-UniRule"/>
</dbReference>
<dbReference type="GO" id="GO:0003735">
    <property type="term" value="F:structural constituent of ribosome"/>
    <property type="evidence" value="ECO:0000318"/>
    <property type="project" value="GO_Central"/>
</dbReference>
<dbReference type="GO" id="GO:0000028">
    <property type="term" value="P:ribosomal small subunit assembly"/>
    <property type="evidence" value="ECO:0000318"/>
    <property type="project" value="GO_Central"/>
</dbReference>
<dbReference type="GO" id="GO:0006412">
    <property type="term" value="P:translation"/>
    <property type="evidence" value="ECO:0007669"/>
    <property type="project" value="UniProtKB-UniRule"/>
</dbReference>
<dbReference type="FunFam" id="3.30.860.10:FF:000001">
    <property type="entry name" value="30S ribosomal protein S19"/>
    <property type="match status" value="1"/>
</dbReference>
<dbReference type="Gene3D" id="3.30.860.10">
    <property type="entry name" value="30s Ribosomal Protein S19, Chain A"/>
    <property type="match status" value="1"/>
</dbReference>
<dbReference type="HAMAP" id="MF_00531">
    <property type="entry name" value="Ribosomal_uS19"/>
    <property type="match status" value="1"/>
</dbReference>
<dbReference type="InterPro" id="IPR002222">
    <property type="entry name" value="Ribosomal_uS19"/>
</dbReference>
<dbReference type="InterPro" id="IPR005732">
    <property type="entry name" value="Ribosomal_uS19_bac-type"/>
</dbReference>
<dbReference type="InterPro" id="IPR020934">
    <property type="entry name" value="Ribosomal_uS19_CS"/>
</dbReference>
<dbReference type="InterPro" id="IPR023575">
    <property type="entry name" value="Ribosomal_uS19_SF"/>
</dbReference>
<dbReference type="NCBIfam" id="TIGR01050">
    <property type="entry name" value="rpsS_bact"/>
    <property type="match status" value="1"/>
</dbReference>
<dbReference type="PANTHER" id="PTHR11880">
    <property type="entry name" value="RIBOSOMAL PROTEIN S19P FAMILY MEMBER"/>
    <property type="match status" value="1"/>
</dbReference>
<dbReference type="PANTHER" id="PTHR11880:SF8">
    <property type="entry name" value="SMALL RIBOSOMAL SUBUNIT PROTEIN US19M"/>
    <property type="match status" value="1"/>
</dbReference>
<dbReference type="Pfam" id="PF00203">
    <property type="entry name" value="Ribosomal_S19"/>
    <property type="match status" value="1"/>
</dbReference>
<dbReference type="PIRSF" id="PIRSF002144">
    <property type="entry name" value="Ribosomal_S19"/>
    <property type="match status" value="1"/>
</dbReference>
<dbReference type="PRINTS" id="PR00975">
    <property type="entry name" value="RIBOSOMALS19"/>
</dbReference>
<dbReference type="SUPFAM" id="SSF54570">
    <property type="entry name" value="Ribosomal protein S19"/>
    <property type="match status" value="1"/>
</dbReference>
<dbReference type="PROSITE" id="PS00323">
    <property type="entry name" value="RIBOSOMAL_S19"/>
    <property type="match status" value="1"/>
</dbReference>
<accession>P60577</accession>
<sequence length="93" mass="10753">MTRKKTNPFVAHHLLAKIEKVNMKEEKETIVTWSRASSILPTMVGHTIAIHNGKEHIPIYITNPMVGRKLGEFVPTRHFTSYENARKDTKSRR</sequence>
<proteinExistence type="inferred from homology"/>